<feature type="chain" id="PRO_1000097482" description="Translational regulator CsrA">
    <location>
        <begin position="1"/>
        <end position="78"/>
    </location>
</feature>
<gene>
    <name evidence="1" type="primary">csrA</name>
    <name type="ordered locus">BRE_182</name>
</gene>
<comment type="function">
    <text evidence="1">A translational regulator that binds mRNA to regulate translation initiation and/or mRNA stability. Usually binds in the 5'-UTR at or near the Shine-Dalgarno sequence preventing ribosome-binding, thus repressing translation. Its main target seems to be the major flagellin gene, while its function is anatagonized by FliW.</text>
</comment>
<comment type="subunit">
    <text evidence="1">Homodimer; the beta-strands of each monomer intercalate to form a hydrophobic core, while the alpha-helices form wings that extend away from the core.</text>
</comment>
<comment type="subcellular location">
    <subcellularLocation>
        <location evidence="1">Cytoplasm</location>
    </subcellularLocation>
</comment>
<comment type="similarity">
    <text evidence="1">Belongs to the CsrA/RsmA family.</text>
</comment>
<evidence type="ECO:0000255" key="1">
    <source>
        <dbReference type="HAMAP-Rule" id="MF_00167"/>
    </source>
</evidence>
<accession>B5RR03</accession>
<proteinExistence type="inferred from homology"/>
<organism>
    <name type="scientific">Borrelia recurrentis (strain A1)</name>
    <dbReference type="NCBI Taxonomy" id="412418"/>
    <lineage>
        <taxon>Bacteria</taxon>
        <taxon>Pseudomonadati</taxon>
        <taxon>Spirochaetota</taxon>
        <taxon>Spirochaetia</taxon>
        <taxon>Spirochaetales</taxon>
        <taxon>Borreliaceae</taxon>
        <taxon>Borrelia</taxon>
    </lineage>
</organism>
<dbReference type="EMBL" id="CP000993">
    <property type="protein sequence ID" value="ACH94437.1"/>
    <property type="molecule type" value="Genomic_DNA"/>
</dbReference>
<dbReference type="RefSeq" id="WP_012537951.1">
    <property type="nucleotide sequence ID" value="NZ_CP169983.1"/>
</dbReference>
<dbReference type="SMR" id="B5RR03"/>
<dbReference type="KEGG" id="bre:BRE_182"/>
<dbReference type="HOGENOM" id="CLU_164837_0_2_12"/>
<dbReference type="Proteomes" id="UP000000612">
    <property type="component" value="Chromosome"/>
</dbReference>
<dbReference type="GO" id="GO:0005829">
    <property type="term" value="C:cytosol"/>
    <property type="evidence" value="ECO:0007669"/>
    <property type="project" value="TreeGrafter"/>
</dbReference>
<dbReference type="GO" id="GO:0048027">
    <property type="term" value="F:mRNA 5'-UTR binding"/>
    <property type="evidence" value="ECO:0007669"/>
    <property type="project" value="UniProtKB-UniRule"/>
</dbReference>
<dbReference type="GO" id="GO:0044781">
    <property type="term" value="P:bacterial-type flagellum organization"/>
    <property type="evidence" value="ECO:0007669"/>
    <property type="project" value="UniProtKB-KW"/>
</dbReference>
<dbReference type="GO" id="GO:0006402">
    <property type="term" value="P:mRNA catabolic process"/>
    <property type="evidence" value="ECO:0007669"/>
    <property type="project" value="InterPro"/>
</dbReference>
<dbReference type="GO" id="GO:0045947">
    <property type="term" value="P:negative regulation of translational initiation"/>
    <property type="evidence" value="ECO:0007669"/>
    <property type="project" value="UniProtKB-UniRule"/>
</dbReference>
<dbReference type="GO" id="GO:1902208">
    <property type="term" value="P:regulation of bacterial-type flagellum assembly"/>
    <property type="evidence" value="ECO:0007669"/>
    <property type="project" value="UniProtKB-UniRule"/>
</dbReference>
<dbReference type="GO" id="GO:0006109">
    <property type="term" value="P:regulation of carbohydrate metabolic process"/>
    <property type="evidence" value="ECO:0007669"/>
    <property type="project" value="InterPro"/>
</dbReference>
<dbReference type="FunFam" id="2.60.40.4380:FF:000002">
    <property type="entry name" value="Translational regulator CsrA"/>
    <property type="match status" value="1"/>
</dbReference>
<dbReference type="Gene3D" id="2.60.40.4380">
    <property type="entry name" value="Translational regulator CsrA"/>
    <property type="match status" value="1"/>
</dbReference>
<dbReference type="HAMAP" id="MF_00167">
    <property type="entry name" value="CsrA"/>
    <property type="match status" value="1"/>
</dbReference>
<dbReference type="InterPro" id="IPR003751">
    <property type="entry name" value="CsrA"/>
</dbReference>
<dbReference type="InterPro" id="IPR036107">
    <property type="entry name" value="CsrA_sf"/>
</dbReference>
<dbReference type="NCBIfam" id="TIGR00202">
    <property type="entry name" value="csrA"/>
    <property type="match status" value="1"/>
</dbReference>
<dbReference type="NCBIfam" id="NF002469">
    <property type="entry name" value="PRK01712.1"/>
    <property type="match status" value="1"/>
</dbReference>
<dbReference type="PANTHER" id="PTHR34984">
    <property type="entry name" value="CARBON STORAGE REGULATOR"/>
    <property type="match status" value="1"/>
</dbReference>
<dbReference type="PANTHER" id="PTHR34984:SF1">
    <property type="entry name" value="CARBON STORAGE REGULATOR"/>
    <property type="match status" value="1"/>
</dbReference>
<dbReference type="Pfam" id="PF02599">
    <property type="entry name" value="CsrA"/>
    <property type="match status" value="1"/>
</dbReference>
<dbReference type="SUPFAM" id="SSF117130">
    <property type="entry name" value="CsrA-like"/>
    <property type="match status" value="1"/>
</dbReference>
<protein>
    <recommendedName>
        <fullName evidence="1">Translational regulator CsrA</fullName>
    </recommendedName>
</protein>
<sequence>MLVLSRKANESIKIDSNIEISILEIKKDSVKIAIKAPENIKILRSEIYDIIKEENKKSILQDKNNIHKIKKLFDYFSK</sequence>
<keyword id="KW-1005">Bacterial flagellum biogenesis</keyword>
<keyword id="KW-0963">Cytoplasm</keyword>
<keyword id="KW-0678">Repressor</keyword>
<keyword id="KW-0694">RNA-binding</keyword>
<keyword id="KW-0810">Translation regulation</keyword>
<name>CSRA_BORRA</name>
<reference key="1">
    <citation type="journal article" date="2008" name="PLoS Genet.">
        <title>The genome of Borrelia recurrentis, the agent of deadly louse-borne relapsing fever, is a degraded subset of tick-borne Borrelia duttonii.</title>
        <authorList>
            <person name="Lescot M."/>
            <person name="Audic S."/>
            <person name="Robert C."/>
            <person name="Nguyen T.T."/>
            <person name="Blanc G."/>
            <person name="Cutler S.J."/>
            <person name="Wincker P."/>
            <person name="Couloux A."/>
            <person name="Claverie J.-M."/>
            <person name="Raoult D."/>
            <person name="Drancourt M."/>
        </authorList>
    </citation>
    <scope>NUCLEOTIDE SEQUENCE [LARGE SCALE GENOMIC DNA]</scope>
    <source>
        <strain>A1</strain>
    </source>
</reference>